<keyword id="KW-0119">Carbohydrate metabolism</keyword>
<keyword id="KW-0963">Cytoplasm</keyword>
<keyword id="KW-0413">Isomerase</keyword>
<keyword id="KW-0684">Rhamnose metabolism</keyword>
<evidence type="ECO:0000255" key="1">
    <source>
        <dbReference type="HAMAP-Rule" id="MF_01663"/>
    </source>
</evidence>
<accession>B1KAV4</accession>
<reference key="1">
    <citation type="submission" date="2008-02" db="EMBL/GenBank/DDBJ databases">
        <title>Complete sequence of chromosome 3 of Burkholderia cenocepacia MC0-3.</title>
        <authorList>
            <person name="Copeland A."/>
            <person name="Lucas S."/>
            <person name="Lapidus A."/>
            <person name="Barry K."/>
            <person name="Bruce D."/>
            <person name="Goodwin L."/>
            <person name="Glavina del Rio T."/>
            <person name="Dalin E."/>
            <person name="Tice H."/>
            <person name="Pitluck S."/>
            <person name="Chain P."/>
            <person name="Malfatti S."/>
            <person name="Shin M."/>
            <person name="Vergez L."/>
            <person name="Schmutz J."/>
            <person name="Larimer F."/>
            <person name="Land M."/>
            <person name="Hauser L."/>
            <person name="Kyrpides N."/>
            <person name="Mikhailova N."/>
            <person name="Tiedje J."/>
            <person name="Richardson P."/>
        </authorList>
    </citation>
    <scope>NUCLEOTIDE SEQUENCE [LARGE SCALE GENOMIC DNA]</scope>
    <source>
        <strain>MC0-3</strain>
    </source>
</reference>
<dbReference type="EC" id="5.1.3.32" evidence="1"/>
<dbReference type="EMBL" id="CP000960">
    <property type="protein sequence ID" value="ACA95351.1"/>
    <property type="molecule type" value="Genomic_DNA"/>
</dbReference>
<dbReference type="RefSeq" id="WP_012336765.1">
    <property type="nucleotide sequence ID" value="NC_010512.1"/>
</dbReference>
<dbReference type="SMR" id="B1KAV4"/>
<dbReference type="GeneID" id="83052872"/>
<dbReference type="KEGG" id="bcm:Bcenmc03_6232"/>
<dbReference type="HOGENOM" id="CLU_100689_2_0_4"/>
<dbReference type="UniPathway" id="UPA00125"/>
<dbReference type="Proteomes" id="UP000002169">
    <property type="component" value="Chromosome 3"/>
</dbReference>
<dbReference type="GO" id="GO:0005737">
    <property type="term" value="C:cytoplasm"/>
    <property type="evidence" value="ECO:0007669"/>
    <property type="project" value="UniProtKB-SubCell"/>
</dbReference>
<dbReference type="GO" id="GO:0062192">
    <property type="term" value="F:L-rhamnose mutarotase activity"/>
    <property type="evidence" value="ECO:0007669"/>
    <property type="project" value="UniProtKB-EC"/>
</dbReference>
<dbReference type="GO" id="GO:0019301">
    <property type="term" value="P:rhamnose catabolic process"/>
    <property type="evidence" value="ECO:0007669"/>
    <property type="project" value="TreeGrafter"/>
</dbReference>
<dbReference type="Gene3D" id="3.30.70.100">
    <property type="match status" value="1"/>
</dbReference>
<dbReference type="HAMAP" id="MF_01663">
    <property type="entry name" value="L_rham_rotase"/>
    <property type="match status" value="1"/>
</dbReference>
<dbReference type="InterPro" id="IPR011008">
    <property type="entry name" value="Dimeric_a/b-barrel"/>
</dbReference>
<dbReference type="InterPro" id="IPR013448">
    <property type="entry name" value="L-rhamnose_mutarotase"/>
</dbReference>
<dbReference type="InterPro" id="IPR008000">
    <property type="entry name" value="Rham/fucose_mutarotase"/>
</dbReference>
<dbReference type="NCBIfam" id="TIGR02625">
    <property type="entry name" value="YiiL_rotase"/>
    <property type="match status" value="1"/>
</dbReference>
<dbReference type="PANTHER" id="PTHR34389">
    <property type="entry name" value="L-RHAMNOSE MUTAROTASE"/>
    <property type="match status" value="1"/>
</dbReference>
<dbReference type="PANTHER" id="PTHR34389:SF2">
    <property type="entry name" value="L-RHAMNOSE MUTAROTASE"/>
    <property type="match status" value="1"/>
</dbReference>
<dbReference type="Pfam" id="PF05336">
    <property type="entry name" value="rhaM"/>
    <property type="match status" value="1"/>
</dbReference>
<dbReference type="SUPFAM" id="SSF54909">
    <property type="entry name" value="Dimeric alpha+beta barrel"/>
    <property type="match status" value="1"/>
</dbReference>
<organism>
    <name type="scientific">Burkholderia orbicola (strain MC0-3)</name>
    <dbReference type="NCBI Taxonomy" id="406425"/>
    <lineage>
        <taxon>Bacteria</taxon>
        <taxon>Pseudomonadati</taxon>
        <taxon>Pseudomonadota</taxon>
        <taxon>Betaproteobacteria</taxon>
        <taxon>Burkholderiales</taxon>
        <taxon>Burkholderiaceae</taxon>
        <taxon>Burkholderia</taxon>
        <taxon>Burkholderia cepacia complex</taxon>
        <taxon>Burkholderia orbicola</taxon>
    </lineage>
</organism>
<name>RHAM_BURO0</name>
<sequence length="104" mass="12300">METIAFRMRLHPGKQDEYRRRHDAIWPELADALRAAGISDYWIFLDDDTHHLFAVLRRPADHRIAQLAETDVMRRWWAYMADLMATGPDGRPVEKALEPMFHLE</sequence>
<protein>
    <recommendedName>
        <fullName evidence="1">L-rhamnose mutarotase</fullName>
        <ecNumber evidence="1">5.1.3.32</ecNumber>
    </recommendedName>
    <alternativeName>
        <fullName evidence="1">Rhamnose 1-epimerase</fullName>
    </alternativeName>
    <alternativeName>
        <fullName evidence="1">Type-3 mutarotase</fullName>
    </alternativeName>
</protein>
<feature type="chain" id="PRO_0000344559" description="L-rhamnose mutarotase">
    <location>
        <begin position="1"/>
        <end position="104"/>
    </location>
</feature>
<feature type="active site" description="Proton donor" evidence="1">
    <location>
        <position position="22"/>
    </location>
</feature>
<feature type="binding site" evidence="1">
    <location>
        <position position="18"/>
    </location>
    <ligand>
        <name>substrate</name>
    </ligand>
</feature>
<feature type="binding site" evidence="1">
    <location>
        <position position="41"/>
    </location>
    <ligand>
        <name>substrate</name>
    </ligand>
</feature>
<feature type="binding site" evidence="1">
    <location>
        <begin position="76"/>
        <end position="77"/>
    </location>
    <ligand>
        <name>substrate</name>
    </ligand>
</feature>
<gene>
    <name evidence="1" type="primary">rhaM</name>
    <name type="ordered locus">Bcenmc03_6232</name>
</gene>
<comment type="function">
    <text evidence="1">Involved in the anomeric conversion of L-rhamnose.</text>
</comment>
<comment type="catalytic activity">
    <reaction evidence="1">
        <text>alpha-L-rhamnose = beta-L-rhamnose</text>
        <dbReference type="Rhea" id="RHEA:25584"/>
        <dbReference type="ChEBI" id="CHEBI:27586"/>
        <dbReference type="ChEBI" id="CHEBI:27907"/>
        <dbReference type="EC" id="5.1.3.32"/>
    </reaction>
</comment>
<comment type="pathway">
    <text evidence="1">Carbohydrate metabolism; L-rhamnose metabolism.</text>
</comment>
<comment type="subunit">
    <text evidence="1">Homodimer.</text>
</comment>
<comment type="subcellular location">
    <subcellularLocation>
        <location evidence="1">Cytoplasm</location>
    </subcellularLocation>
</comment>
<comment type="similarity">
    <text evidence="1">Belongs to the rhamnose mutarotase family.</text>
</comment>
<proteinExistence type="inferred from homology"/>